<gene>
    <name type="primary">MT-CYB</name>
    <name type="synonym">COB</name>
    <name type="synonym">CYTB</name>
    <name type="synonym">MTCYB</name>
</gene>
<dbReference type="EMBL" id="U66510">
    <property type="protein sequence ID" value="AAB06765.1"/>
    <property type="molecule type" value="Genomic_DNA"/>
</dbReference>
<dbReference type="EMBL" id="L19510">
    <property type="protein sequence ID" value="AAC06107.1"/>
    <property type="molecule type" value="Genomic_DNA"/>
</dbReference>
<dbReference type="SMR" id="Q95718"/>
<dbReference type="GO" id="GO:0005743">
    <property type="term" value="C:mitochondrial inner membrane"/>
    <property type="evidence" value="ECO:0007669"/>
    <property type="project" value="UniProtKB-SubCell"/>
</dbReference>
<dbReference type="GO" id="GO:0045275">
    <property type="term" value="C:respiratory chain complex III"/>
    <property type="evidence" value="ECO:0007669"/>
    <property type="project" value="InterPro"/>
</dbReference>
<dbReference type="GO" id="GO:0046872">
    <property type="term" value="F:metal ion binding"/>
    <property type="evidence" value="ECO:0007669"/>
    <property type="project" value="UniProtKB-KW"/>
</dbReference>
<dbReference type="GO" id="GO:0008121">
    <property type="term" value="F:ubiquinol-cytochrome-c reductase activity"/>
    <property type="evidence" value="ECO:0007669"/>
    <property type="project" value="InterPro"/>
</dbReference>
<dbReference type="GO" id="GO:0006122">
    <property type="term" value="P:mitochondrial electron transport, ubiquinol to cytochrome c"/>
    <property type="evidence" value="ECO:0007669"/>
    <property type="project" value="TreeGrafter"/>
</dbReference>
<dbReference type="CDD" id="cd00290">
    <property type="entry name" value="cytochrome_b_C"/>
    <property type="match status" value="1"/>
</dbReference>
<dbReference type="CDD" id="cd00284">
    <property type="entry name" value="Cytochrome_b_N"/>
    <property type="match status" value="1"/>
</dbReference>
<dbReference type="FunFam" id="1.20.810.10:FF:000002">
    <property type="entry name" value="Cytochrome b"/>
    <property type="match status" value="1"/>
</dbReference>
<dbReference type="Gene3D" id="1.20.810.10">
    <property type="entry name" value="Cytochrome Bc1 Complex, Chain C"/>
    <property type="match status" value="1"/>
</dbReference>
<dbReference type="InterPro" id="IPR005798">
    <property type="entry name" value="Cyt_b/b6_C"/>
</dbReference>
<dbReference type="InterPro" id="IPR036150">
    <property type="entry name" value="Cyt_b/b6_C_sf"/>
</dbReference>
<dbReference type="InterPro" id="IPR005797">
    <property type="entry name" value="Cyt_b/b6_N"/>
</dbReference>
<dbReference type="InterPro" id="IPR027387">
    <property type="entry name" value="Cytb/b6-like_sf"/>
</dbReference>
<dbReference type="InterPro" id="IPR030689">
    <property type="entry name" value="Cytochrome_b"/>
</dbReference>
<dbReference type="InterPro" id="IPR048260">
    <property type="entry name" value="Cytochrome_b_C_euk/bac"/>
</dbReference>
<dbReference type="InterPro" id="IPR048259">
    <property type="entry name" value="Cytochrome_b_N_euk/bac"/>
</dbReference>
<dbReference type="InterPro" id="IPR016174">
    <property type="entry name" value="Di-haem_cyt_TM"/>
</dbReference>
<dbReference type="PANTHER" id="PTHR19271">
    <property type="entry name" value="CYTOCHROME B"/>
    <property type="match status" value="1"/>
</dbReference>
<dbReference type="PANTHER" id="PTHR19271:SF16">
    <property type="entry name" value="CYTOCHROME B"/>
    <property type="match status" value="1"/>
</dbReference>
<dbReference type="Pfam" id="PF00032">
    <property type="entry name" value="Cytochrom_B_C"/>
    <property type="match status" value="1"/>
</dbReference>
<dbReference type="Pfam" id="PF00033">
    <property type="entry name" value="Cytochrome_B"/>
    <property type="match status" value="1"/>
</dbReference>
<dbReference type="PIRSF" id="PIRSF038885">
    <property type="entry name" value="COB"/>
    <property type="match status" value="1"/>
</dbReference>
<dbReference type="SUPFAM" id="SSF81648">
    <property type="entry name" value="a domain/subunit of cytochrome bc1 complex (Ubiquinol-cytochrome c reductase)"/>
    <property type="match status" value="1"/>
</dbReference>
<dbReference type="SUPFAM" id="SSF81342">
    <property type="entry name" value="Transmembrane di-heme cytochromes"/>
    <property type="match status" value="1"/>
</dbReference>
<dbReference type="PROSITE" id="PS51003">
    <property type="entry name" value="CYTB_CTER"/>
    <property type="match status" value="1"/>
</dbReference>
<dbReference type="PROSITE" id="PS51002">
    <property type="entry name" value="CYTB_NTER"/>
    <property type="match status" value="1"/>
</dbReference>
<accession>Q95718</accession>
<accession>Q34294</accession>
<geneLocation type="mitochondrion"/>
<reference key="1">
    <citation type="submission" date="1996-08" db="EMBL/GenBank/DDBJ databases">
        <title>Phylogenetic accuracy, stability, and congruence: relationships within and among the New World bat genera Artibeus, Dermanura, and Koopmania.</title>
        <authorList>
            <person name="den Bussche R.A."/>
            <person name="Hudgeons J.L."/>
            <person name="Baker R.J."/>
        </authorList>
    </citation>
    <scope>NUCLEOTIDE SEQUENCE [GENOMIC DNA]</scope>
    <source>
        <strain>Isolate TK 4723</strain>
    </source>
</reference>
<reference key="2">
    <citation type="journal article" date="1993" name="Mol. Biol. Evol.">
        <title>Molecular phylogenetics of Stenodermatini bat genera: congruence of data from nuclear and mitochondrial DNA.</title>
        <authorList>
            <person name="den Bussche R.A."/>
            <person name="Baker R.J."/>
            <person name="Wichman H.A."/>
            <person name="Hamilton M.J."/>
        </authorList>
    </citation>
    <scope>NUCLEOTIDE SEQUENCE [GENOMIC DNA] OF 1-134</scope>
    <source>
        <strain>Isolate TK 4723</strain>
        <tissue>Muscle</tissue>
    </source>
</reference>
<evidence type="ECO:0000250" key="1"/>
<evidence type="ECO:0000250" key="2">
    <source>
        <dbReference type="UniProtKB" id="P00157"/>
    </source>
</evidence>
<evidence type="ECO:0000255" key="3">
    <source>
        <dbReference type="PROSITE-ProRule" id="PRU00967"/>
    </source>
</evidence>
<evidence type="ECO:0000255" key="4">
    <source>
        <dbReference type="PROSITE-ProRule" id="PRU00968"/>
    </source>
</evidence>
<evidence type="ECO:0000305" key="5"/>
<protein>
    <recommendedName>
        <fullName>Cytochrome b</fullName>
    </recommendedName>
    <alternativeName>
        <fullName>Complex III subunit 3</fullName>
    </alternativeName>
    <alternativeName>
        <fullName>Complex III subunit III</fullName>
    </alternativeName>
    <alternativeName>
        <fullName>Cytochrome b-c1 complex subunit 3</fullName>
    </alternativeName>
    <alternativeName>
        <fullName>Ubiquinol-cytochrome-c reductase complex cytochrome b subunit</fullName>
    </alternativeName>
</protein>
<name>CYB_ARTAZ</name>
<keyword id="KW-0249">Electron transport</keyword>
<keyword id="KW-0349">Heme</keyword>
<keyword id="KW-0408">Iron</keyword>
<keyword id="KW-0472">Membrane</keyword>
<keyword id="KW-0479">Metal-binding</keyword>
<keyword id="KW-0496">Mitochondrion</keyword>
<keyword id="KW-0999">Mitochondrion inner membrane</keyword>
<keyword id="KW-0679">Respiratory chain</keyword>
<keyword id="KW-0812">Transmembrane</keyword>
<keyword id="KW-1133">Transmembrane helix</keyword>
<keyword id="KW-0813">Transport</keyword>
<keyword id="KW-0830">Ubiquinone</keyword>
<organism>
    <name type="scientific">Artibeus aztecus</name>
    <name type="common">Aztec fruit-eating bat</name>
    <name type="synonym">Dermanura azteca</name>
    <dbReference type="NCBI Taxonomy" id="40239"/>
    <lineage>
        <taxon>Eukaryota</taxon>
        <taxon>Metazoa</taxon>
        <taxon>Chordata</taxon>
        <taxon>Craniata</taxon>
        <taxon>Vertebrata</taxon>
        <taxon>Euteleostomi</taxon>
        <taxon>Mammalia</taxon>
        <taxon>Eutheria</taxon>
        <taxon>Laurasiatheria</taxon>
        <taxon>Chiroptera</taxon>
        <taxon>Yangochiroptera</taxon>
        <taxon>Phyllostomidae</taxon>
        <taxon>Stenodermatinae</taxon>
        <taxon>Artibeus</taxon>
    </lineage>
</organism>
<comment type="function">
    <text evidence="2">Component of the ubiquinol-cytochrome c reductase complex (complex III or cytochrome b-c1 complex) that is part of the mitochondrial respiratory chain. The b-c1 complex mediates electron transfer from ubiquinol to cytochrome c. Contributes to the generation of a proton gradient across the mitochondrial membrane that is then used for ATP synthesis.</text>
</comment>
<comment type="cofactor">
    <cofactor evidence="2">
        <name>heme b</name>
        <dbReference type="ChEBI" id="CHEBI:60344"/>
    </cofactor>
    <text evidence="2">Binds 2 heme b groups non-covalently.</text>
</comment>
<comment type="subunit">
    <text evidence="2">The cytochrome bc1 complex contains 11 subunits: 3 respiratory subunits (MT-CYB, CYC1 and UQCRFS1), 2 core proteins (UQCRC1 and UQCRC2) and 6 low-molecular weight proteins (UQCRH/QCR6, UQCRB/QCR7, UQCRQ/QCR8, UQCR10/QCR9, UQCR11/QCR10 and a cleavage product of UQCRFS1). This cytochrome bc1 complex then forms a dimer.</text>
</comment>
<comment type="subcellular location">
    <subcellularLocation>
        <location evidence="2">Mitochondrion inner membrane</location>
        <topology evidence="2">Multi-pass membrane protein</topology>
    </subcellularLocation>
</comment>
<comment type="miscellaneous">
    <text evidence="1">Heme 1 (or BL or b562) is low-potential and absorbs at about 562 nm, and heme 2 (or BH or b566) is high-potential and absorbs at about 566 nm.</text>
</comment>
<comment type="similarity">
    <text evidence="3 4">Belongs to the cytochrome b family.</text>
</comment>
<comment type="caution">
    <text evidence="2">The full-length protein contains only eight transmembrane helices, not nine as predicted by bioinformatics tools.</text>
</comment>
<sequence>MTNIRKTHPLLKIINSSFVDLPAPSSLSSWWNFGSLLGVCLGVQILTGLFLAMHYTSDTATAFNSVTHICRDVNYGWLLRYLHANGASMFFICLYLHVGRGLFYGSYTYSETWNIGILLLFAVMATAFMGYVLPWGQMSFWGATVITNLLSAIPYIGTDLLQWIWGGFSVDKSTLTRFFAFHFLLPFIVTALVMVHLLFLHETGSNNPTGIPSDPDMIPFHPYYTIKDILGFLVMLTALATLVLFSPDLLGDPDNYIPANPLTTPPHIKPEWYFLFAYAILRSIPNKLGGVLALVMSILILAIVPILHTSKQRSMMFRPLSQCLFWLLVAILFTLTWIGGQPVEHPYIIIGQTASVLYFLIILFFMPMVSMVENYLLKW</sequence>
<proteinExistence type="inferred from homology"/>
<feature type="chain" id="PRO_0000060623" description="Cytochrome b">
    <location>
        <begin position="1"/>
        <end position="379"/>
    </location>
</feature>
<feature type="transmembrane region" description="Helical" evidence="2">
    <location>
        <begin position="33"/>
        <end position="53"/>
    </location>
</feature>
<feature type="transmembrane region" description="Helical" evidence="2">
    <location>
        <begin position="77"/>
        <end position="98"/>
    </location>
</feature>
<feature type="transmembrane region" description="Helical" evidence="2">
    <location>
        <begin position="113"/>
        <end position="133"/>
    </location>
</feature>
<feature type="transmembrane region" description="Helical" evidence="2">
    <location>
        <begin position="178"/>
        <end position="198"/>
    </location>
</feature>
<feature type="transmembrane region" description="Helical" evidence="2">
    <location>
        <begin position="226"/>
        <end position="246"/>
    </location>
</feature>
<feature type="transmembrane region" description="Helical" evidence="2">
    <location>
        <begin position="288"/>
        <end position="308"/>
    </location>
</feature>
<feature type="transmembrane region" description="Helical" evidence="2">
    <location>
        <begin position="320"/>
        <end position="340"/>
    </location>
</feature>
<feature type="transmembrane region" description="Helical" evidence="2">
    <location>
        <begin position="347"/>
        <end position="367"/>
    </location>
</feature>
<feature type="binding site" description="axial binding residue" evidence="2">
    <location>
        <position position="83"/>
    </location>
    <ligand>
        <name>heme b</name>
        <dbReference type="ChEBI" id="CHEBI:60344"/>
        <label>b562</label>
    </ligand>
    <ligandPart>
        <name>Fe</name>
        <dbReference type="ChEBI" id="CHEBI:18248"/>
    </ligandPart>
</feature>
<feature type="binding site" description="axial binding residue" evidence="2">
    <location>
        <position position="97"/>
    </location>
    <ligand>
        <name>heme b</name>
        <dbReference type="ChEBI" id="CHEBI:60344"/>
        <label>b566</label>
    </ligand>
    <ligandPart>
        <name>Fe</name>
        <dbReference type="ChEBI" id="CHEBI:18248"/>
    </ligandPart>
</feature>
<feature type="binding site" description="axial binding residue" evidence="2">
    <location>
        <position position="182"/>
    </location>
    <ligand>
        <name>heme b</name>
        <dbReference type="ChEBI" id="CHEBI:60344"/>
        <label>b562</label>
    </ligand>
    <ligandPart>
        <name>Fe</name>
        <dbReference type="ChEBI" id="CHEBI:18248"/>
    </ligandPart>
</feature>
<feature type="binding site" description="axial binding residue" evidence="2">
    <location>
        <position position="196"/>
    </location>
    <ligand>
        <name>heme b</name>
        <dbReference type="ChEBI" id="CHEBI:60344"/>
        <label>b566</label>
    </ligand>
    <ligandPart>
        <name>Fe</name>
        <dbReference type="ChEBI" id="CHEBI:18248"/>
    </ligandPart>
</feature>
<feature type="binding site" evidence="2">
    <location>
        <position position="201"/>
    </location>
    <ligand>
        <name>a ubiquinone</name>
        <dbReference type="ChEBI" id="CHEBI:16389"/>
    </ligand>
</feature>
<feature type="sequence conflict" description="In Ref. 2; AAC06107." evidence="5" ref="2">
    <original>S</original>
    <variation>T</variation>
    <location>
        <position position="88"/>
    </location>
</feature>
<feature type="sequence conflict" description="In Ref. 2; AAC06107." evidence="5" ref="2">
    <original>F</original>
    <variation>Y</variation>
    <location>
        <position position="103"/>
    </location>
</feature>